<comment type="function">
    <text evidence="1">The heterodimer glycoprotein H-glycoprotein L is required for the fusion of viral and plasma membranes leading to virus entry into the host cell. Acts as a functional inhibitor of gH and maintains gH in an inhibited form. Upon binding to host integrins, gL dissociates from gH leading to activation of the viral fusion glycoproteins gB and gH.</text>
</comment>
<comment type="subunit">
    <text evidence="1">Interacts with glycoprotein H (gH); this interaction is necessary for the correct processing and cell surface expression of gH. The heterodimer gH/gL seems to interact with gB trimers during fusion.</text>
</comment>
<comment type="subcellular location">
    <subcellularLocation>
        <location evidence="1">Virion membrane</location>
        <topology evidence="1">Peripheral membrane protein</topology>
        <orientation evidence="1">Extracellular side</orientation>
    </subcellularLocation>
    <subcellularLocation>
        <location evidence="1">Host cell membrane</location>
        <topology evidence="1">Peripheral membrane protein</topology>
        <orientation evidence="1">Extracellular side</orientation>
    </subcellularLocation>
    <subcellularLocation>
        <location evidence="1">Host Golgi apparatus</location>
        <location evidence="1">Host trans-Golgi network</location>
    </subcellularLocation>
    <text evidence="1">gL associates with the extravirion surface through its binding to gH. During virion morphogenesis, this protein probably accumulates in the host trans-Golgi where secondary envelopment occurs.</text>
</comment>
<comment type="similarity">
    <text evidence="2">Belongs to the herpesviridae glycoprotein L (gL) family. Alphaherpesvirinae gL subfamily.</text>
</comment>
<organismHost>
    <name type="scientific">Homo sapiens</name>
    <name type="common">Human</name>
    <dbReference type="NCBI Taxonomy" id="9606"/>
</organismHost>
<organism>
    <name type="scientific">Human herpesvirus 2 (strain HG52)</name>
    <name type="common">HHV-2</name>
    <name type="synonym">Human herpes simplex virus 2</name>
    <dbReference type="NCBI Taxonomy" id="10315"/>
    <lineage>
        <taxon>Viruses</taxon>
        <taxon>Duplodnaviria</taxon>
        <taxon>Heunggongvirae</taxon>
        <taxon>Peploviricota</taxon>
        <taxon>Herviviricetes</taxon>
        <taxon>Herpesvirales</taxon>
        <taxon>Orthoherpesviridae</taxon>
        <taxon>Alphaherpesvirinae</taxon>
        <taxon>Simplexvirus</taxon>
        <taxon>Simplexvirus humanalpha2</taxon>
        <taxon>Human herpesvirus 2</taxon>
    </lineage>
</organism>
<sequence>MGFVCLFGLVVMGAWGAWGGSQATEYVLRSVIAKEVGDILRVPCMRTPADDVSWRYEAPSVIDYARIDGIFLRYHCPGLDTFLWDRHAQRAYLVNPFLFAAGFLEDLSHSVFPADTQETTTRRALYKEIRDALGSRKQAVSHAPVRAGCVNFDYSRTRRCVGRRDLRPANTTSTWEPPVSSDDEASSQSKPLATQPPVLALSNAPPRRVSPTRGRRRHTRLRRN</sequence>
<keyword id="KW-0002">3D-structure</keyword>
<keyword id="KW-1015">Disulfide bond</keyword>
<keyword id="KW-1169">Fusion of virus membrane with host cell membrane</keyword>
<keyword id="KW-1168">Fusion of virus membrane with host membrane</keyword>
<keyword id="KW-0325">Glycoprotein</keyword>
<keyword id="KW-1032">Host cell membrane</keyword>
<keyword id="KW-1040">Host Golgi apparatus</keyword>
<keyword id="KW-1043">Host membrane</keyword>
<keyword id="KW-0472">Membrane</keyword>
<keyword id="KW-1185">Reference proteome</keyword>
<keyword id="KW-0732">Signal</keyword>
<keyword id="KW-0261">Viral envelope protein</keyword>
<keyword id="KW-1162">Viral penetration into host cytoplasm</keyword>
<keyword id="KW-0946">Virion</keyword>
<keyword id="KW-1160">Virus entry into host cell</keyword>
<name>GL_HHV2H</name>
<gene>
    <name evidence="1" type="primary">gL</name>
    <name type="ORF">UL1</name>
</gene>
<reference key="1">
    <citation type="journal article" date="1991" name="J. Gen. Virol.">
        <title>Comparative sequence analysis of the long repeat regions and adjoining parts of the long unique regions in the genomes of herpes simplex viruses types 1 and 2.</title>
        <authorList>
            <person name="McGeoch D.J."/>
            <person name="Cunningham C."/>
            <person name="McIntyre G."/>
            <person name="Dolan A."/>
        </authorList>
    </citation>
    <scope>NUCLEOTIDE SEQUENCE [GENOMIC DNA]</scope>
</reference>
<reference key="2">
    <citation type="journal article" date="1998" name="J. Virol.">
        <title>The genome sequence of herpes simplex virus type 2.</title>
        <authorList>
            <person name="Dolan A."/>
            <person name="Jamieson F.E."/>
            <person name="Cunningham C."/>
            <person name="Barnett B.C."/>
            <person name="McGeoch D.J."/>
        </authorList>
    </citation>
    <scope>NUCLEOTIDE SEQUENCE [LARGE SCALE GENOMIC DNA]</scope>
</reference>
<dbReference type="EMBL" id="D10470">
    <property type="protein sequence ID" value="BAA01264.1"/>
    <property type="molecule type" value="Genomic_DNA"/>
</dbReference>
<dbReference type="EMBL" id="Z86099">
    <property type="protein sequence ID" value="CAB06761.1"/>
    <property type="molecule type" value="Genomic_DNA"/>
</dbReference>
<dbReference type="PIR" id="JQ1494">
    <property type="entry name" value="WMBEHG"/>
</dbReference>
<dbReference type="RefSeq" id="YP_009137152.1">
    <property type="nucleotide sequence ID" value="NC_001798.2"/>
</dbReference>
<dbReference type="PDB" id="3M1C">
    <property type="method" value="X-ray"/>
    <property type="resolution" value="3.00 A"/>
    <property type="chains" value="B=21-224"/>
</dbReference>
<dbReference type="PDBsum" id="3M1C"/>
<dbReference type="SMR" id="P28278"/>
<dbReference type="DNASU" id="1487292"/>
<dbReference type="GeneID" id="1487292"/>
<dbReference type="KEGG" id="vg:1487292"/>
<dbReference type="EvolutionaryTrace" id="P28278"/>
<dbReference type="Proteomes" id="UP000001874">
    <property type="component" value="Segment"/>
</dbReference>
<dbReference type="GO" id="GO:0044177">
    <property type="term" value="C:host cell Golgi apparatus"/>
    <property type="evidence" value="ECO:0007669"/>
    <property type="project" value="UniProtKB-SubCell"/>
</dbReference>
<dbReference type="GO" id="GO:0020002">
    <property type="term" value="C:host cell plasma membrane"/>
    <property type="evidence" value="ECO:0007669"/>
    <property type="project" value="UniProtKB-SubCell"/>
</dbReference>
<dbReference type="GO" id="GO:0016020">
    <property type="term" value="C:membrane"/>
    <property type="evidence" value="ECO:0007669"/>
    <property type="project" value="UniProtKB-KW"/>
</dbReference>
<dbReference type="GO" id="GO:0019031">
    <property type="term" value="C:viral envelope"/>
    <property type="evidence" value="ECO:0007669"/>
    <property type="project" value="UniProtKB-KW"/>
</dbReference>
<dbReference type="GO" id="GO:0055036">
    <property type="term" value="C:virion membrane"/>
    <property type="evidence" value="ECO:0007669"/>
    <property type="project" value="UniProtKB-SubCell"/>
</dbReference>
<dbReference type="GO" id="GO:0019064">
    <property type="term" value="P:fusion of virus membrane with host plasma membrane"/>
    <property type="evidence" value="ECO:0007669"/>
    <property type="project" value="UniProtKB-KW"/>
</dbReference>
<dbReference type="GO" id="GO:0046718">
    <property type="term" value="P:symbiont entry into host cell"/>
    <property type="evidence" value="ECO:0007669"/>
    <property type="project" value="UniProtKB-KW"/>
</dbReference>
<dbReference type="Gene3D" id="3.30.390.170">
    <property type="match status" value="1"/>
</dbReference>
<dbReference type="HAMAP" id="MF_04034">
    <property type="entry name" value="HSV_GL_alphagamma"/>
    <property type="match status" value="1"/>
</dbReference>
<dbReference type="InterPro" id="IPR022200">
    <property type="entry name" value="Herpes_gL_C"/>
</dbReference>
<dbReference type="InterPro" id="IPR007923">
    <property type="entry name" value="Herpes_gL_N"/>
</dbReference>
<dbReference type="InterPro" id="IPR038311">
    <property type="entry name" value="Herpes_gL_N_sf"/>
</dbReference>
<dbReference type="InterPro" id="IPR034708">
    <property type="entry name" value="HSV_GL_alphagamma"/>
</dbReference>
<dbReference type="Pfam" id="PF12524">
    <property type="entry name" value="GlyL_C"/>
    <property type="match status" value="1"/>
</dbReference>
<dbReference type="Pfam" id="PF05259">
    <property type="entry name" value="Herpes_UL1"/>
    <property type="match status" value="1"/>
</dbReference>
<dbReference type="PROSITE" id="PS52024">
    <property type="entry name" value="GL_AHV"/>
    <property type="match status" value="1"/>
</dbReference>
<protein>
    <recommendedName>
        <fullName evidence="1">Envelope glycoprotein L</fullName>
        <shortName evidence="1">gL</shortName>
    </recommendedName>
</protein>
<proteinExistence type="evidence at protein level"/>
<feature type="signal peptide" evidence="1">
    <location>
        <begin position="1"/>
        <end position="16"/>
    </location>
</feature>
<feature type="chain" id="PRO_0000038265" description="Envelope glycoprotein L" evidence="1">
    <location>
        <begin position="17"/>
        <end position="224"/>
    </location>
</feature>
<feature type="domain" description="gL alphaherpesvirus-type" evidence="2">
    <location>
        <begin position="23"/>
        <end position="201"/>
    </location>
</feature>
<feature type="region of interest" description="Interaction with gH" evidence="1">
    <location>
        <begin position="20"/>
        <end position="161"/>
    </location>
</feature>
<feature type="region of interest" description="Disordered" evidence="3">
    <location>
        <begin position="168"/>
        <end position="224"/>
    </location>
</feature>
<feature type="compositionally biased region" description="Basic residues" evidence="3">
    <location>
        <begin position="213"/>
        <end position="224"/>
    </location>
</feature>
<feature type="disulfide bond" evidence="2">
    <location>
        <begin position="44"/>
        <end position="76"/>
    </location>
</feature>
<feature type="disulfide bond" evidence="2">
    <location>
        <begin position="149"/>
        <end position="160"/>
    </location>
</feature>
<feature type="strand" evidence="4">
    <location>
        <begin position="26"/>
        <end position="28"/>
    </location>
</feature>
<feature type="helix" evidence="4">
    <location>
        <begin position="36"/>
        <end position="40"/>
    </location>
</feature>
<feature type="strand" evidence="4">
    <location>
        <begin position="54"/>
        <end position="56"/>
    </location>
</feature>
<feature type="helix" evidence="4">
    <location>
        <begin position="64"/>
        <end position="66"/>
    </location>
</feature>
<feature type="strand" evidence="4">
    <location>
        <begin position="69"/>
        <end position="73"/>
    </location>
</feature>
<feature type="strand" evidence="4">
    <location>
        <begin position="81"/>
        <end position="85"/>
    </location>
</feature>
<feature type="turn" evidence="4">
    <location>
        <begin position="86"/>
        <end position="89"/>
    </location>
</feature>
<feature type="strand" evidence="4">
    <location>
        <begin position="90"/>
        <end position="94"/>
    </location>
</feature>
<feature type="helix" evidence="4">
    <location>
        <begin position="96"/>
        <end position="108"/>
    </location>
</feature>
<feature type="helix" evidence="4">
    <location>
        <begin position="117"/>
        <end position="134"/>
    </location>
</feature>
<feature type="turn" evidence="4">
    <location>
        <begin position="135"/>
        <end position="138"/>
    </location>
</feature>
<accession>P28278</accession>
<evidence type="ECO:0000255" key="1">
    <source>
        <dbReference type="HAMAP-Rule" id="MF_04034"/>
    </source>
</evidence>
<evidence type="ECO:0000255" key="2">
    <source>
        <dbReference type="PROSITE-ProRule" id="PRU01368"/>
    </source>
</evidence>
<evidence type="ECO:0000256" key="3">
    <source>
        <dbReference type="SAM" id="MobiDB-lite"/>
    </source>
</evidence>
<evidence type="ECO:0007829" key="4">
    <source>
        <dbReference type="PDB" id="3M1C"/>
    </source>
</evidence>